<keyword id="KW-0001">2Fe-2S</keyword>
<keyword id="KW-0004">4Fe-4S</keyword>
<keyword id="KW-0093">Biotin biosynthesis</keyword>
<keyword id="KW-0408">Iron</keyword>
<keyword id="KW-0411">Iron-sulfur</keyword>
<keyword id="KW-0479">Metal-binding</keyword>
<keyword id="KW-1185">Reference proteome</keyword>
<keyword id="KW-0949">S-adenosyl-L-methionine</keyword>
<keyword id="KW-0808">Transferase</keyword>
<evidence type="ECO:0000255" key="1">
    <source>
        <dbReference type="HAMAP-Rule" id="MF_01694"/>
    </source>
</evidence>
<evidence type="ECO:0000255" key="2">
    <source>
        <dbReference type="PROSITE-ProRule" id="PRU01266"/>
    </source>
</evidence>
<dbReference type="EC" id="2.8.1.6" evidence="1"/>
<dbReference type="EMBL" id="BX248354">
    <property type="protein sequence ID" value="CAE48610.1"/>
    <property type="molecule type" value="Genomic_DNA"/>
</dbReference>
<dbReference type="SMR" id="Q6NKC7"/>
<dbReference type="STRING" id="257309.DIP0105"/>
<dbReference type="KEGG" id="cdi:DIP0105"/>
<dbReference type="HOGENOM" id="CLU_033172_2_1_11"/>
<dbReference type="UniPathway" id="UPA00078">
    <property type="reaction ID" value="UER00162"/>
</dbReference>
<dbReference type="Proteomes" id="UP000002198">
    <property type="component" value="Chromosome"/>
</dbReference>
<dbReference type="GO" id="GO:0051537">
    <property type="term" value="F:2 iron, 2 sulfur cluster binding"/>
    <property type="evidence" value="ECO:0007669"/>
    <property type="project" value="UniProtKB-KW"/>
</dbReference>
<dbReference type="GO" id="GO:0051539">
    <property type="term" value="F:4 iron, 4 sulfur cluster binding"/>
    <property type="evidence" value="ECO:0007669"/>
    <property type="project" value="UniProtKB-KW"/>
</dbReference>
<dbReference type="GO" id="GO:0004076">
    <property type="term" value="F:biotin synthase activity"/>
    <property type="evidence" value="ECO:0007669"/>
    <property type="project" value="UniProtKB-UniRule"/>
</dbReference>
<dbReference type="GO" id="GO:0005506">
    <property type="term" value="F:iron ion binding"/>
    <property type="evidence" value="ECO:0007669"/>
    <property type="project" value="UniProtKB-UniRule"/>
</dbReference>
<dbReference type="GO" id="GO:0009102">
    <property type="term" value="P:biotin biosynthetic process"/>
    <property type="evidence" value="ECO:0007669"/>
    <property type="project" value="UniProtKB-UniRule"/>
</dbReference>
<dbReference type="CDD" id="cd01335">
    <property type="entry name" value="Radical_SAM"/>
    <property type="match status" value="1"/>
</dbReference>
<dbReference type="FunFam" id="3.20.20.70:FF:000026">
    <property type="entry name" value="Biotin synthase"/>
    <property type="match status" value="1"/>
</dbReference>
<dbReference type="Gene3D" id="3.20.20.70">
    <property type="entry name" value="Aldolase class I"/>
    <property type="match status" value="1"/>
</dbReference>
<dbReference type="HAMAP" id="MF_01694">
    <property type="entry name" value="BioB"/>
    <property type="match status" value="1"/>
</dbReference>
<dbReference type="InterPro" id="IPR013785">
    <property type="entry name" value="Aldolase_TIM"/>
</dbReference>
<dbReference type="InterPro" id="IPR010722">
    <property type="entry name" value="BATS_dom"/>
</dbReference>
<dbReference type="InterPro" id="IPR002684">
    <property type="entry name" value="Biotin_synth/BioAB"/>
</dbReference>
<dbReference type="InterPro" id="IPR024177">
    <property type="entry name" value="Biotin_synthase"/>
</dbReference>
<dbReference type="InterPro" id="IPR006638">
    <property type="entry name" value="Elp3/MiaA/NifB-like_rSAM"/>
</dbReference>
<dbReference type="InterPro" id="IPR007197">
    <property type="entry name" value="rSAM"/>
</dbReference>
<dbReference type="NCBIfam" id="TIGR00433">
    <property type="entry name" value="bioB"/>
    <property type="match status" value="1"/>
</dbReference>
<dbReference type="PANTHER" id="PTHR22976">
    <property type="entry name" value="BIOTIN SYNTHASE"/>
    <property type="match status" value="1"/>
</dbReference>
<dbReference type="PANTHER" id="PTHR22976:SF2">
    <property type="entry name" value="BIOTIN SYNTHASE, MITOCHONDRIAL"/>
    <property type="match status" value="1"/>
</dbReference>
<dbReference type="Pfam" id="PF06968">
    <property type="entry name" value="BATS"/>
    <property type="match status" value="1"/>
</dbReference>
<dbReference type="Pfam" id="PF04055">
    <property type="entry name" value="Radical_SAM"/>
    <property type="match status" value="1"/>
</dbReference>
<dbReference type="PIRSF" id="PIRSF001619">
    <property type="entry name" value="Biotin_synth"/>
    <property type="match status" value="1"/>
</dbReference>
<dbReference type="SFLD" id="SFLDG01278">
    <property type="entry name" value="biotin_synthase_like"/>
    <property type="match status" value="1"/>
</dbReference>
<dbReference type="SFLD" id="SFLDS00029">
    <property type="entry name" value="Radical_SAM"/>
    <property type="match status" value="1"/>
</dbReference>
<dbReference type="SMART" id="SM00876">
    <property type="entry name" value="BATS"/>
    <property type="match status" value="1"/>
</dbReference>
<dbReference type="SMART" id="SM00729">
    <property type="entry name" value="Elp3"/>
    <property type="match status" value="1"/>
</dbReference>
<dbReference type="SUPFAM" id="SSF102114">
    <property type="entry name" value="Radical SAM enzymes"/>
    <property type="match status" value="1"/>
</dbReference>
<dbReference type="PROSITE" id="PS51918">
    <property type="entry name" value="RADICAL_SAM"/>
    <property type="match status" value="1"/>
</dbReference>
<name>BIOB1_CORDI</name>
<comment type="function">
    <text evidence="1">Catalyzes the conversion of dethiobiotin (DTB) to biotin by the insertion of a sulfur atom into dethiobiotin via a radical-based mechanism.</text>
</comment>
<comment type="catalytic activity">
    <reaction evidence="1">
        <text>(4R,5S)-dethiobiotin + (sulfur carrier)-SH + 2 reduced [2Fe-2S]-[ferredoxin] + 2 S-adenosyl-L-methionine = (sulfur carrier)-H + biotin + 2 5'-deoxyadenosine + 2 L-methionine + 2 oxidized [2Fe-2S]-[ferredoxin]</text>
        <dbReference type="Rhea" id="RHEA:22060"/>
        <dbReference type="Rhea" id="RHEA-COMP:10000"/>
        <dbReference type="Rhea" id="RHEA-COMP:10001"/>
        <dbReference type="Rhea" id="RHEA-COMP:14737"/>
        <dbReference type="Rhea" id="RHEA-COMP:14739"/>
        <dbReference type="ChEBI" id="CHEBI:17319"/>
        <dbReference type="ChEBI" id="CHEBI:29917"/>
        <dbReference type="ChEBI" id="CHEBI:33737"/>
        <dbReference type="ChEBI" id="CHEBI:33738"/>
        <dbReference type="ChEBI" id="CHEBI:57586"/>
        <dbReference type="ChEBI" id="CHEBI:57844"/>
        <dbReference type="ChEBI" id="CHEBI:59789"/>
        <dbReference type="ChEBI" id="CHEBI:64428"/>
        <dbReference type="ChEBI" id="CHEBI:149473"/>
        <dbReference type="EC" id="2.8.1.6"/>
    </reaction>
</comment>
<comment type="cofactor">
    <cofactor evidence="1">
        <name>[4Fe-4S] cluster</name>
        <dbReference type="ChEBI" id="CHEBI:49883"/>
    </cofactor>
    <text evidence="1">Binds 1 [4Fe-4S] cluster. The cluster is coordinated with 3 cysteines and an exchangeable S-adenosyl-L-methionine.</text>
</comment>
<comment type="cofactor">
    <cofactor evidence="1">
        <name>[2Fe-2S] cluster</name>
        <dbReference type="ChEBI" id="CHEBI:190135"/>
    </cofactor>
    <text evidence="1">Binds 1 [2Fe-2S] cluster. The cluster is coordinated with 3 cysteines and 1 arginine.</text>
</comment>
<comment type="pathway">
    <text evidence="1">Cofactor biosynthesis; biotin biosynthesis; biotin from 7,8-diaminononanoate: step 2/2.</text>
</comment>
<comment type="subunit">
    <text evidence="1">Homodimer.</text>
</comment>
<comment type="similarity">
    <text evidence="1">Belongs to the radical SAM superfamily. Biotin synthase family.</text>
</comment>
<gene>
    <name evidence="1" type="primary">bioB1</name>
    <name type="ordered locus">DIP0105</name>
</gene>
<sequence length="350" mass="38224">MIIARIFGHLPIATTWEHHVTDILELARTKVLNNGEGLNKEEVLQVLQLDEARIPELLELAHEVRLKWCGEEVEVEGIISLKTGGCPEDCHFCSQSGLFESPVRSAWLDIAGLVEAAKQTQKSGATEFCIVAAVKGPDERLMSQLEEAVAAIKSEVDIEVAASIGILTQEQVDRLKAAGVHRYNHNLETARSYFPNVVTTHSWESRRETLRMVGEAGMEVCSGGIIGMGETLEQRAEFACDLAELNPTEVPMNFLDPRPGTPFADYEVLDTTDALRAIGAFRLALPKTILRFAGGRELTLGDLGTEQGLLGGINAVIVGNYLTTLGRPMEQDLDMLGKLRLPIKALNASV</sequence>
<reference key="1">
    <citation type="journal article" date="2003" name="Nucleic Acids Res.">
        <title>The complete genome sequence and analysis of Corynebacterium diphtheriae NCTC13129.</title>
        <authorList>
            <person name="Cerdeno-Tarraga A.-M."/>
            <person name="Efstratiou A."/>
            <person name="Dover L.G."/>
            <person name="Holden M.T.G."/>
            <person name="Pallen M.J."/>
            <person name="Bentley S.D."/>
            <person name="Besra G.S."/>
            <person name="Churcher C.M."/>
            <person name="James K.D."/>
            <person name="De Zoysa A."/>
            <person name="Chillingworth T."/>
            <person name="Cronin A."/>
            <person name="Dowd L."/>
            <person name="Feltwell T."/>
            <person name="Hamlin N."/>
            <person name="Holroyd S."/>
            <person name="Jagels K."/>
            <person name="Moule S."/>
            <person name="Quail M.A."/>
            <person name="Rabbinowitsch E."/>
            <person name="Rutherford K.M."/>
            <person name="Thomson N.R."/>
            <person name="Unwin L."/>
            <person name="Whitehead S."/>
            <person name="Barrell B.G."/>
            <person name="Parkhill J."/>
        </authorList>
    </citation>
    <scope>NUCLEOTIDE SEQUENCE [LARGE SCALE GENOMIC DNA]</scope>
    <source>
        <strain>ATCC 700971 / NCTC 13129 / Biotype gravis</strain>
    </source>
</reference>
<accession>Q6NKC7</accession>
<protein>
    <recommendedName>
        <fullName evidence="1">Biotin synthase 1</fullName>
        <ecNumber evidence="1">2.8.1.6</ecNumber>
    </recommendedName>
</protein>
<feature type="chain" id="PRO_0000381325" description="Biotin synthase 1">
    <location>
        <begin position="1"/>
        <end position="350"/>
    </location>
</feature>
<feature type="domain" description="Radical SAM core" evidence="2">
    <location>
        <begin position="71"/>
        <end position="296"/>
    </location>
</feature>
<feature type="binding site" evidence="1">
    <location>
        <position position="86"/>
    </location>
    <ligand>
        <name>[4Fe-4S] cluster</name>
        <dbReference type="ChEBI" id="CHEBI:49883"/>
        <note>4Fe-4S-S-AdoMet</note>
    </ligand>
</feature>
<feature type="binding site" evidence="1">
    <location>
        <position position="90"/>
    </location>
    <ligand>
        <name>[4Fe-4S] cluster</name>
        <dbReference type="ChEBI" id="CHEBI:49883"/>
        <note>4Fe-4S-S-AdoMet</note>
    </ligand>
</feature>
<feature type="binding site" evidence="1">
    <location>
        <position position="93"/>
    </location>
    <ligand>
        <name>[4Fe-4S] cluster</name>
        <dbReference type="ChEBI" id="CHEBI:49883"/>
        <note>4Fe-4S-S-AdoMet</note>
    </ligand>
</feature>
<feature type="binding site" evidence="1">
    <location>
        <position position="129"/>
    </location>
    <ligand>
        <name>[2Fe-2S] cluster</name>
        <dbReference type="ChEBI" id="CHEBI:190135"/>
    </ligand>
</feature>
<feature type="binding site" evidence="1">
    <location>
        <position position="221"/>
    </location>
    <ligand>
        <name>[2Fe-2S] cluster</name>
        <dbReference type="ChEBI" id="CHEBI:190135"/>
    </ligand>
</feature>
<feature type="binding site" evidence="1">
    <location>
        <position position="291"/>
    </location>
    <ligand>
        <name>[2Fe-2S] cluster</name>
        <dbReference type="ChEBI" id="CHEBI:190135"/>
    </ligand>
</feature>
<organism>
    <name type="scientific">Corynebacterium diphtheriae (strain ATCC 700971 / NCTC 13129 / Biotype gravis)</name>
    <dbReference type="NCBI Taxonomy" id="257309"/>
    <lineage>
        <taxon>Bacteria</taxon>
        <taxon>Bacillati</taxon>
        <taxon>Actinomycetota</taxon>
        <taxon>Actinomycetes</taxon>
        <taxon>Mycobacteriales</taxon>
        <taxon>Corynebacteriaceae</taxon>
        <taxon>Corynebacterium</taxon>
    </lineage>
</organism>
<proteinExistence type="inferred from homology"/>